<organism>
    <name type="scientific">Hemiscorpius lepturus</name>
    <name type="common">Scorpion</name>
    <dbReference type="NCBI Taxonomy" id="520031"/>
    <lineage>
        <taxon>Eukaryota</taxon>
        <taxon>Metazoa</taxon>
        <taxon>Ecdysozoa</taxon>
        <taxon>Arthropoda</taxon>
        <taxon>Chelicerata</taxon>
        <taxon>Arachnida</taxon>
        <taxon>Scorpiones</taxon>
        <taxon>Iurida</taxon>
        <taxon>Scorpionoidea</taxon>
        <taxon>Hemiscorpiidae</taxon>
    </lineage>
</organism>
<name>KAX6F_HEMLE</name>
<dbReference type="SMR" id="P85528"/>
<dbReference type="GO" id="GO:0005576">
    <property type="term" value="C:extracellular region"/>
    <property type="evidence" value="ECO:0000314"/>
    <property type="project" value="UniProtKB"/>
</dbReference>
<dbReference type="GO" id="GO:0019870">
    <property type="term" value="F:potassium channel inhibitor activity"/>
    <property type="evidence" value="ECO:0000314"/>
    <property type="project" value="UniProtKB"/>
</dbReference>
<dbReference type="GO" id="GO:0090729">
    <property type="term" value="F:toxin activity"/>
    <property type="evidence" value="ECO:0000314"/>
    <property type="project" value="UniProtKB"/>
</dbReference>
<dbReference type="GO" id="GO:0044562">
    <property type="term" value="P:envenomation resulting in negative regulation of voltage-gated potassium channel activity in another organism"/>
    <property type="evidence" value="ECO:0000314"/>
    <property type="project" value="UniProtKB"/>
</dbReference>
<dbReference type="Gene3D" id="3.30.30.10">
    <property type="entry name" value="Knottin, scorpion toxin-like"/>
    <property type="match status" value="1"/>
</dbReference>
<dbReference type="InterPro" id="IPR036574">
    <property type="entry name" value="Scorpion_toxin-like_sf"/>
</dbReference>
<dbReference type="InterPro" id="IPR001947">
    <property type="entry name" value="Scorpion_toxinS_K_inh"/>
</dbReference>
<dbReference type="Pfam" id="PF00451">
    <property type="entry name" value="Toxin_2"/>
    <property type="match status" value="1"/>
</dbReference>
<dbReference type="PRINTS" id="PR00286">
    <property type="entry name" value="CHARYBDTOXIN"/>
</dbReference>
<dbReference type="SUPFAM" id="SSF57095">
    <property type="entry name" value="Scorpion toxin-like"/>
    <property type="match status" value="1"/>
</dbReference>
<dbReference type="PROSITE" id="PS01138">
    <property type="entry name" value="SCORP_SHORT_TOXIN"/>
    <property type="match status" value="1"/>
</dbReference>
<comment type="function">
    <text evidence="3">Blocks voltage-gated potassium channels rKv1.1/KCNA1 (IC(50)=13 nM), rKv1.2/KCNA2 (IC(50)=16 nM) and rKv1.3/KCNA3 (IC(50)=2 nM).</text>
</comment>
<comment type="subcellular location">
    <subcellularLocation>
        <location evidence="3">Secreted</location>
    </subcellularLocation>
</comment>
<comment type="tissue specificity">
    <text evidence="6">Expressed by the venom gland.</text>
</comment>
<comment type="domain">
    <text evidence="5">Has the structural arrangement of an alpha-helix connected to antiparallel beta-sheets by disulfide bonds (CS-alpha/beta).</text>
</comment>
<comment type="mass spectrometry"/>
<comment type="toxic dose">
    <text evidence="3">LD(50) is 15 ug/kg by intracerebroventricular injection into C57BL mice.</text>
</comment>
<comment type="similarity">
    <text evidence="2">Belongs to the short scorpion toxin superfamily. Potassium channel inhibitor family. Alpha-KTx 06 subfamily.</text>
</comment>
<accession>P85528</accession>
<feature type="peptide" id="PRO_0000341448" description="Potassium channel toxin alpha-KTx 6.15" evidence="3">
    <location>
        <begin position="1"/>
        <end position="35"/>
    </location>
</feature>
<feature type="site" description="Basic residue of the functional dyad" evidence="1">
    <location>
        <position position="23"/>
    </location>
</feature>
<feature type="site" description="Aromatic residue of the functional dyad" evidence="1">
    <location>
        <position position="32"/>
    </location>
</feature>
<feature type="disulfide bond" evidence="3">
    <location>
        <begin position="3"/>
        <end position="24"/>
    </location>
</feature>
<feature type="disulfide bond" evidence="3">
    <location>
        <begin position="9"/>
        <end position="29"/>
    </location>
</feature>
<feature type="disulfide bond" evidence="3">
    <location>
        <begin position="13"/>
        <end position="31"/>
    </location>
</feature>
<feature type="disulfide bond" evidence="3">
    <location>
        <begin position="19"/>
        <end position="34"/>
    </location>
</feature>
<sequence>IKCTLSKDCYSPCKKETGCPRAKCINRNCKCYGCS</sequence>
<evidence type="ECO:0000250" key="1">
    <source>
        <dbReference type="UniProtKB" id="Q10726"/>
    </source>
</evidence>
<evidence type="ECO:0000255" key="2"/>
<evidence type="ECO:0000269" key="3">
    <source>
    </source>
</evidence>
<evidence type="ECO:0000303" key="4">
    <source>
    </source>
</evidence>
<evidence type="ECO:0000305" key="5"/>
<evidence type="ECO:0000305" key="6">
    <source>
    </source>
</evidence>
<reference key="1">
    <citation type="journal article" date="2008" name="FEBS J.">
        <title>Hemitoxin, the first potassium channel toxin from the venom of the Iranian scorpion Hemiscorpius lepturus.</title>
        <authorList>
            <person name="Srairi-Abid N."/>
            <person name="Shahbazzadeh D."/>
            <person name="Chatti I."/>
            <person name="Mlayah-Bellalouna S."/>
            <person name="Mejdoub H."/>
            <person name="Borchani L."/>
            <person name="Benkhalifa R."/>
            <person name="Akbari A."/>
            <person name="El Ayeb M."/>
        </authorList>
    </citation>
    <scope>PROTEIN SEQUENCE</scope>
    <scope>FUNCTION</scope>
    <scope>SUBCELLULAR LOCATION</scope>
    <scope>TOXIC DOSE</scope>
    <scope>MASS SPECTROMETRY</scope>
    <scope>DISULFIDE BONDS</scope>
    <source>
        <tissue>Venom</tissue>
    </source>
</reference>
<protein>
    <recommendedName>
        <fullName evidence="4">Potassium channel toxin alpha-KTx 6.15</fullName>
    </recommendedName>
    <alternativeName>
        <fullName evidence="4">Hemitoxin</fullName>
    </alternativeName>
</protein>
<proteinExistence type="evidence at protein level"/>
<keyword id="KW-0903">Direct protein sequencing</keyword>
<keyword id="KW-1015">Disulfide bond</keyword>
<keyword id="KW-0872">Ion channel impairing toxin</keyword>
<keyword id="KW-0528">Neurotoxin</keyword>
<keyword id="KW-0632">Potassium channel impairing toxin</keyword>
<keyword id="KW-0964">Secreted</keyword>
<keyword id="KW-0800">Toxin</keyword>
<keyword id="KW-1220">Voltage-gated potassium channel impairing toxin</keyword>